<comment type="subcellular location">
    <subcellularLocation>
        <location evidence="1">Mitochondrion</location>
    </subcellularLocation>
</comment>
<comment type="similarity">
    <text evidence="3">Belongs to the AIM9 family.</text>
</comment>
<gene>
    <name type="primary">AIM9</name>
    <name type="synonym">FMP29</name>
    <name type="ORF">CAWG_01251</name>
</gene>
<evidence type="ECO:0000250" key="1"/>
<evidence type="ECO:0000255" key="2"/>
<evidence type="ECO:0000305" key="3"/>
<name>AIM9_CANAW</name>
<dbReference type="EMBL" id="CH672346">
    <property type="protein sequence ID" value="EEQ43020.1"/>
    <property type="molecule type" value="Genomic_DNA"/>
</dbReference>
<dbReference type="PaxDb" id="5476-C4YFD4"/>
<dbReference type="VEuPathDB" id="FungiDB:CAWG_01251"/>
<dbReference type="HOGENOM" id="CLU_019189_0_1_1"/>
<dbReference type="OMA" id="GWIPQDM"/>
<dbReference type="OrthoDB" id="8397at766764"/>
<dbReference type="Proteomes" id="UP000001429">
    <property type="component" value="Chromosome 1, Supercontig 1.1"/>
</dbReference>
<dbReference type="GO" id="GO:0005739">
    <property type="term" value="C:mitochondrion"/>
    <property type="evidence" value="ECO:0007669"/>
    <property type="project" value="UniProtKB-SubCell"/>
</dbReference>
<dbReference type="Gene3D" id="3.30.200.20">
    <property type="entry name" value="Phosphorylase Kinase, domain 1"/>
    <property type="match status" value="1"/>
</dbReference>
<dbReference type="InterPro" id="IPR011009">
    <property type="entry name" value="Kinase-like_dom_sf"/>
</dbReference>
<dbReference type="InterPro" id="IPR051035">
    <property type="entry name" value="Mito_inheritance_9"/>
</dbReference>
<dbReference type="PANTHER" id="PTHR36091">
    <property type="entry name" value="ALTERED INHERITANCE OF MITOCHONDRIA PROTEIN 9, MITOCHONDRIAL"/>
    <property type="match status" value="1"/>
</dbReference>
<dbReference type="PANTHER" id="PTHR36091:SF1">
    <property type="entry name" value="ALTERED INHERITANCE OF MITOCHONDRIA PROTEIN 9, MITOCHONDRIAL"/>
    <property type="match status" value="1"/>
</dbReference>
<dbReference type="SUPFAM" id="SSF56112">
    <property type="entry name" value="Protein kinase-like (PK-like)"/>
    <property type="match status" value="1"/>
</dbReference>
<sequence>MLSRVARCSRTLNQVTRNGQSGLFSAVLRTSIRQNSTDSPASNNANEIYTKLSDTKDPQRNQFFQYTWGSWLTNDKSKKKQRETTFSIEGLTLFIDRINQLESKLAQPKSLEGAFVLANNKELLGSTKDKVIVRSIASIHEGKHHRVYKITLNTGKELVLRIPYKLDSDVAIASKLKSEVATTDFLKLKLGLNVPRVLAYGVDSNNEIKSPFILQEFISGELLMKKWHPLLPDSEETNKCLHEVIDPIAQFQNKILSVTFNKFGSLYFHDDVEGSLQNDVPYEGETDSALSNRWRIGPSVERQFTRNKNKLQQSIIDQYNGPWDASNPTAVLESVADIELENAKSKLSLINADAGANENDRALITKQIKTFENLKKISPQLINDKSKSIMNVEVLFKPRLYIPDLDPLNVIQHSDTENYFIDFEGSTIKPFILTSYPKFVAYQGAKIYNLEEDVPGYKEMEELEKQQYEFMYYKTRNERMWEFELNKYRHDLIAIASPHIKVLKSPYLQALDVKNGKDYLYVEGSIVQLQAMWEAYVANELVNSKDTKFPIEYTAEYLDQHQQELSDYQLETVSSPFSATGGWIPQDMFDTLKAQGILVETKDGNYKVETEKVLENPPAQPEEK</sequence>
<protein>
    <recommendedName>
        <fullName>Altered inheritance of mitochondria protein 9, mitochondrial</fullName>
    </recommendedName>
    <alternativeName>
        <fullName>Found in mitochondrial proteome protein 29</fullName>
    </alternativeName>
</protein>
<accession>C4YFD4</accession>
<keyword id="KW-0496">Mitochondrion</keyword>
<keyword id="KW-0809">Transit peptide</keyword>
<organism>
    <name type="scientific">Candida albicans (strain WO-1)</name>
    <name type="common">Yeast</name>
    <dbReference type="NCBI Taxonomy" id="294748"/>
    <lineage>
        <taxon>Eukaryota</taxon>
        <taxon>Fungi</taxon>
        <taxon>Dikarya</taxon>
        <taxon>Ascomycota</taxon>
        <taxon>Saccharomycotina</taxon>
        <taxon>Pichiomycetes</taxon>
        <taxon>Debaryomycetaceae</taxon>
        <taxon>Candida/Lodderomyces clade</taxon>
        <taxon>Candida</taxon>
    </lineage>
</organism>
<reference key="1">
    <citation type="journal article" date="2009" name="Nature">
        <title>Evolution of pathogenicity and sexual reproduction in eight Candida genomes.</title>
        <authorList>
            <person name="Butler G."/>
            <person name="Rasmussen M.D."/>
            <person name="Lin M.F."/>
            <person name="Santos M.A.S."/>
            <person name="Sakthikumar S."/>
            <person name="Munro C.A."/>
            <person name="Rheinbay E."/>
            <person name="Grabherr M."/>
            <person name="Forche A."/>
            <person name="Reedy J.L."/>
            <person name="Agrafioti I."/>
            <person name="Arnaud M.B."/>
            <person name="Bates S."/>
            <person name="Brown A.J.P."/>
            <person name="Brunke S."/>
            <person name="Costanzo M.C."/>
            <person name="Fitzpatrick D.A."/>
            <person name="de Groot P.W.J."/>
            <person name="Harris D."/>
            <person name="Hoyer L.L."/>
            <person name="Hube B."/>
            <person name="Klis F.M."/>
            <person name="Kodira C."/>
            <person name="Lennard N."/>
            <person name="Logue M.E."/>
            <person name="Martin R."/>
            <person name="Neiman A.M."/>
            <person name="Nikolaou E."/>
            <person name="Quail M.A."/>
            <person name="Quinn J."/>
            <person name="Santos M.C."/>
            <person name="Schmitzberger F.F."/>
            <person name="Sherlock G."/>
            <person name="Shah P."/>
            <person name="Silverstein K.A.T."/>
            <person name="Skrzypek M.S."/>
            <person name="Soll D."/>
            <person name="Staggs R."/>
            <person name="Stansfield I."/>
            <person name="Stumpf M.P.H."/>
            <person name="Sudbery P.E."/>
            <person name="Srikantha T."/>
            <person name="Zeng Q."/>
            <person name="Berman J."/>
            <person name="Berriman M."/>
            <person name="Heitman J."/>
            <person name="Gow N.A.R."/>
            <person name="Lorenz M.C."/>
            <person name="Birren B.W."/>
            <person name="Kellis M."/>
            <person name="Cuomo C.A."/>
        </authorList>
    </citation>
    <scope>NUCLEOTIDE SEQUENCE [LARGE SCALE GENOMIC DNA]</scope>
    <source>
        <strain>WO-1</strain>
    </source>
</reference>
<proteinExistence type="inferred from homology"/>
<feature type="transit peptide" description="Mitochondrion" evidence="2">
    <location>
        <begin position="1"/>
        <end position="34"/>
    </location>
</feature>
<feature type="chain" id="PRO_0000408717" description="Altered inheritance of mitochondria protein 9, mitochondrial">
    <location>
        <begin position="35"/>
        <end position="624"/>
    </location>
</feature>